<accession>P0CM56</accession>
<accession>Q55HH1</accession>
<accession>Q5K709</accession>
<accession>Q8X227</accession>
<feature type="chain" id="PRO_0000307852" description="Probable O-acetyltransferase CAS1">
    <location>
        <begin position="1"/>
        <end position="960"/>
    </location>
</feature>
<feature type="transmembrane region" description="Helical" evidence="2">
    <location>
        <begin position="18"/>
        <end position="38"/>
    </location>
</feature>
<feature type="transmembrane region" description="Helical" evidence="2">
    <location>
        <begin position="392"/>
        <end position="412"/>
    </location>
</feature>
<feature type="transmembrane region" description="Helical" evidence="2">
    <location>
        <begin position="428"/>
        <end position="448"/>
    </location>
</feature>
<feature type="transmembrane region" description="Helical" evidence="2">
    <location>
        <begin position="461"/>
        <end position="481"/>
    </location>
</feature>
<feature type="transmembrane region" description="Helical" evidence="2">
    <location>
        <begin position="501"/>
        <end position="521"/>
    </location>
</feature>
<feature type="transmembrane region" description="Helical" evidence="2">
    <location>
        <begin position="525"/>
        <end position="545"/>
    </location>
</feature>
<feature type="transmembrane region" description="Helical" evidence="2">
    <location>
        <begin position="555"/>
        <end position="575"/>
    </location>
</feature>
<feature type="transmembrane region" description="Helical" evidence="2">
    <location>
        <begin position="579"/>
        <end position="599"/>
    </location>
</feature>
<feature type="transmembrane region" description="Helical" evidence="2">
    <location>
        <begin position="609"/>
        <end position="629"/>
    </location>
</feature>
<feature type="transmembrane region" description="Helical" evidence="2">
    <location>
        <begin position="655"/>
        <end position="675"/>
    </location>
</feature>
<feature type="transmembrane region" description="Helical" evidence="2">
    <location>
        <begin position="692"/>
        <end position="712"/>
    </location>
</feature>
<feature type="transmembrane region" description="Helical" evidence="2">
    <location>
        <begin position="715"/>
        <end position="735"/>
    </location>
</feature>
<feature type="transmembrane region" description="Helical" evidence="2">
    <location>
        <begin position="940"/>
        <end position="960"/>
    </location>
</feature>
<feature type="active site" description="Acyl-ester intermediate" evidence="1">
    <location>
        <position position="115"/>
    </location>
</feature>
<feature type="active site" evidence="1">
    <location>
        <position position="350"/>
    </location>
</feature>
<feature type="active site" evidence="1">
    <location>
        <position position="353"/>
    </location>
</feature>
<feature type="glycosylation site" description="N-linked (GlcNAc...) asparagine" evidence="2">
    <location>
        <position position="3"/>
    </location>
</feature>
<feature type="glycosylation site" description="N-linked (GlcNAc...) asparagine" evidence="2">
    <location>
        <position position="169"/>
    </location>
</feature>
<feature type="glycosylation site" description="N-linked (GlcNAc...) asparagine" evidence="2">
    <location>
        <position position="830"/>
    </location>
</feature>
<reference key="1">
    <citation type="journal article" date="2001" name="Mol. Microbiol.">
        <title>Cas1p is a membrane protein necessary for the O-acetylation of the Cryptococcus neoformans capsular polysaccharide.</title>
        <authorList>
            <person name="Janbon G."/>
            <person name="Himmelreich U."/>
            <person name="Moyrand F."/>
            <person name="Improvisi L."/>
            <person name="Dromer F."/>
        </authorList>
    </citation>
    <scope>NUCLEOTIDE SEQUENCE [GENOMIC DNA]</scope>
    <scope>FUNCTION</scope>
</reference>
<reference key="2">
    <citation type="journal article" date="2005" name="Science">
        <title>The genome of the basidiomycetous yeast and human pathogen Cryptococcus neoformans.</title>
        <authorList>
            <person name="Loftus B.J."/>
            <person name="Fung E."/>
            <person name="Roncaglia P."/>
            <person name="Rowley D."/>
            <person name="Amedeo P."/>
            <person name="Bruno D."/>
            <person name="Vamathevan J."/>
            <person name="Miranda M."/>
            <person name="Anderson I.J."/>
            <person name="Fraser J.A."/>
            <person name="Allen J.E."/>
            <person name="Bosdet I.E."/>
            <person name="Brent M.R."/>
            <person name="Chiu R."/>
            <person name="Doering T.L."/>
            <person name="Donlin M.J."/>
            <person name="D'Souza C.A."/>
            <person name="Fox D.S."/>
            <person name="Grinberg V."/>
            <person name="Fu J."/>
            <person name="Fukushima M."/>
            <person name="Haas B.J."/>
            <person name="Huang J.C."/>
            <person name="Janbon G."/>
            <person name="Jones S.J.M."/>
            <person name="Koo H.L."/>
            <person name="Krzywinski M.I."/>
            <person name="Kwon-Chung K.J."/>
            <person name="Lengeler K.B."/>
            <person name="Maiti R."/>
            <person name="Marra M.A."/>
            <person name="Marra R.E."/>
            <person name="Mathewson C.A."/>
            <person name="Mitchell T.G."/>
            <person name="Pertea M."/>
            <person name="Riggs F.R."/>
            <person name="Salzberg S.L."/>
            <person name="Schein J.E."/>
            <person name="Shvartsbeyn A."/>
            <person name="Shin H."/>
            <person name="Shumway M."/>
            <person name="Specht C.A."/>
            <person name="Suh B.B."/>
            <person name="Tenney A."/>
            <person name="Utterback T.R."/>
            <person name="Wickes B.L."/>
            <person name="Wortman J.R."/>
            <person name="Wye N.H."/>
            <person name="Kronstad J.W."/>
            <person name="Lodge J.K."/>
            <person name="Heitman J."/>
            <person name="Davis R.W."/>
            <person name="Fraser C.M."/>
            <person name="Hyman R.W."/>
        </authorList>
    </citation>
    <scope>NUCLEOTIDE SEQUENCE [LARGE SCALE GENOMIC DNA]</scope>
    <source>
        <strain>JEC21 / ATCC MYA-565</strain>
    </source>
</reference>
<reference key="3">
    <citation type="journal article" date="2002" name="Mol. Microbiol.">
        <title>Isolation and characterization of capsule structure mutant strains of Cryptococcus neoformans.</title>
        <authorList>
            <person name="Moyrand F."/>
            <person name="Klaproth B."/>
            <person name="Himmelreich U."/>
            <person name="Dromer F."/>
            <person name="Janbon G."/>
        </authorList>
    </citation>
    <scope>FUNCTION</scope>
</reference>
<reference key="4">
    <citation type="journal article" date="2003" name="Infect. Immun.">
        <title>Antigenic and biological characteristics of mutant strains of Cryptococcus neoformans lacking capsular O-acetylation or xylosyl side chains.</title>
        <authorList>
            <person name="Kozel T.R."/>
            <person name="Levitz S.M."/>
            <person name="Dromer F."/>
            <person name="Gates M.A."/>
            <person name="Thorkildson P."/>
            <person name="Janbon G."/>
        </authorList>
    </citation>
    <scope>FUNCTION</scope>
</reference>
<reference key="5">
    <citation type="journal article" date="2004" name="J. Immunol.">
        <title>Unexpected diversity in the fine specificity of monoclonal antibodies that use the same V region gene to glucuronoxylomannan of Cryptococcus neoformans.</title>
        <authorList>
            <person name="McFadden D.C."/>
            <person name="Casadevall A."/>
        </authorList>
    </citation>
    <scope>FUNCTION</scope>
</reference>
<name>CAS1_CRYNJ</name>
<evidence type="ECO:0000250" key="1">
    <source>
        <dbReference type="UniProtKB" id="Q96PB1"/>
    </source>
</evidence>
<evidence type="ECO:0000255" key="2"/>
<evidence type="ECO:0000269" key="3">
    <source>
    </source>
</evidence>
<evidence type="ECO:0000269" key="4">
    <source>
    </source>
</evidence>
<evidence type="ECO:0000269" key="5">
    <source>
    </source>
</evidence>
<evidence type="ECO:0000269" key="6">
    <source>
    </source>
</evidence>
<evidence type="ECO:0000305" key="7"/>
<gene>
    <name type="primary">CAS1</name>
    <name type="ordered locus">CNN01530</name>
</gene>
<organism>
    <name type="scientific">Cryptococcus neoformans var. neoformans serotype D (strain JEC21 / ATCC MYA-565)</name>
    <name type="common">Filobasidiella neoformans</name>
    <dbReference type="NCBI Taxonomy" id="214684"/>
    <lineage>
        <taxon>Eukaryota</taxon>
        <taxon>Fungi</taxon>
        <taxon>Dikarya</taxon>
        <taxon>Basidiomycota</taxon>
        <taxon>Agaricomycotina</taxon>
        <taxon>Tremellomycetes</taxon>
        <taxon>Tremellales</taxon>
        <taxon>Cryptococcaceae</taxon>
        <taxon>Cryptococcus</taxon>
        <taxon>Cryptococcus neoformans species complex</taxon>
    </lineage>
</organism>
<comment type="function">
    <text evidence="3 4 5 6">Probable O-acetyltransferase required for the O-acetylation of the capsular glucoronoxylmannans (GXM) involved in virulence.</text>
</comment>
<comment type="subcellular location">
    <subcellularLocation>
        <location evidence="7">Membrane</location>
        <topology evidence="7">Multi-pass membrane protein</topology>
    </subcellularLocation>
</comment>
<comment type="similarity">
    <text evidence="7">Belongs to the PC-esterase family. CASD1 subfamily.</text>
</comment>
<protein>
    <recommendedName>
        <fullName>Probable O-acetyltransferase CAS1</fullName>
        <ecNumber evidence="3 4 5 6">2.3.1.-</ecNumber>
    </recommendedName>
    <alternativeName>
        <fullName>Capsule synthesis protein 1</fullName>
    </alternativeName>
</protein>
<keyword id="KW-0325">Glycoprotein</keyword>
<keyword id="KW-0472">Membrane</keyword>
<keyword id="KW-0560">Oxidoreductase</keyword>
<keyword id="KW-1185">Reference proteome</keyword>
<keyword id="KW-0808">Transferase</keyword>
<keyword id="KW-0812">Transmembrane</keyword>
<keyword id="KW-1133">Transmembrane helix</keyword>
<dbReference type="EC" id="2.3.1.-" evidence="3 4 5 6"/>
<dbReference type="EMBL" id="AF355592">
    <property type="protein sequence ID" value="AAL35099.1"/>
    <property type="molecule type" value="Genomic_DNA"/>
</dbReference>
<dbReference type="EMBL" id="AE017356">
    <property type="protein sequence ID" value="AAW47111.1"/>
    <property type="molecule type" value="Genomic_DNA"/>
</dbReference>
<dbReference type="RefSeq" id="XP_568628.1">
    <property type="nucleotide sequence ID" value="XM_568628.1"/>
</dbReference>
<dbReference type="GlyCosmos" id="P0CM56">
    <property type="glycosylation" value="3 sites, No reported glycans"/>
</dbReference>
<dbReference type="PaxDb" id="214684-P0CM56"/>
<dbReference type="EnsemblFungi" id="AAW47111">
    <property type="protein sequence ID" value="AAW47111"/>
    <property type="gene ID" value="CNN01530"/>
</dbReference>
<dbReference type="GeneID" id="3255512"/>
<dbReference type="KEGG" id="cne:CNN01530"/>
<dbReference type="VEuPathDB" id="FungiDB:CNN01530"/>
<dbReference type="eggNOG" id="KOG1699">
    <property type="taxonomic scope" value="Eukaryota"/>
</dbReference>
<dbReference type="HOGENOM" id="CLU_008003_0_1_1"/>
<dbReference type="InParanoid" id="P0CM56"/>
<dbReference type="OMA" id="WSAREWA"/>
<dbReference type="OrthoDB" id="1932925at2759"/>
<dbReference type="PHI-base" id="PHI:672"/>
<dbReference type="Proteomes" id="UP000002149">
    <property type="component" value="Chromosome 14"/>
</dbReference>
<dbReference type="GO" id="GO:0005794">
    <property type="term" value="C:Golgi apparatus"/>
    <property type="evidence" value="ECO:0007669"/>
    <property type="project" value="UniProtKB-ARBA"/>
</dbReference>
<dbReference type="GO" id="GO:0016020">
    <property type="term" value="C:membrane"/>
    <property type="evidence" value="ECO:0007669"/>
    <property type="project" value="UniProtKB-SubCell"/>
</dbReference>
<dbReference type="GO" id="GO:0016491">
    <property type="term" value="F:oxidoreductase activity"/>
    <property type="evidence" value="ECO:0007669"/>
    <property type="project" value="UniProtKB-KW"/>
</dbReference>
<dbReference type="GO" id="GO:0016740">
    <property type="term" value="F:transferase activity"/>
    <property type="evidence" value="ECO:0007669"/>
    <property type="project" value="UniProtKB-KW"/>
</dbReference>
<dbReference type="GO" id="GO:0005975">
    <property type="term" value="P:carbohydrate metabolic process"/>
    <property type="evidence" value="ECO:0007669"/>
    <property type="project" value="UniProtKB-ARBA"/>
</dbReference>
<dbReference type="InterPro" id="IPR012419">
    <property type="entry name" value="Cas1_AcylTrans_dom"/>
</dbReference>
<dbReference type="PANTHER" id="PTHR13533">
    <property type="entry name" value="N-ACETYLNEURAMINATE 9-O-ACETYLTRANSFERASE"/>
    <property type="match status" value="1"/>
</dbReference>
<dbReference type="PANTHER" id="PTHR13533:SF1">
    <property type="entry name" value="N-ACETYLNEURAMINATE 9-O-ACETYLTRANSFERASE"/>
    <property type="match status" value="1"/>
</dbReference>
<dbReference type="Pfam" id="PF07779">
    <property type="entry name" value="Cas1_AcylT"/>
    <property type="match status" value="1"/>
</dbReference>
<sequence>MPNSSKPRSQASAAKLNPLWYTYACATLVAAVVLGNILRWAFLELPDSYHCSALLNTGKWLDPGTWTNWQPEGCFQLPLSAQSWQKCLASPTVNTHQALHSSYYDKRTALFVGDSTVRQLYFAAARKVGKTSKAWELEGEKHTDRSLLVSDPLGGPSLELEFWWDPYLNSSKTIGLLSGQSSVPSSLLVMGSGLWYLRNPSSGGLASWGAMIYDTFELVKKNQGSPQTALINPWDNMLLGPGITLPGLLPNQPPKFVDHSREVEARSLFSRASSISHRPTDFSISDAIVFLPISTPVREKLSPSRAETIFHTDVEAMNADLYARLTHPDPPPVVIPSVLNQLLVDDETEDGLHFSDKIMNKQAELLLSWRCNDVMRHEGATGTCCKRYDWVTPIQGLILAVLILWAPLGTFITPRLPPNSPILDYLPATSIAPALSTFGLAMGYLFLADRTHVFQKEQKDYDAVIFGMITLAAFVAGLLTIKNSGKDLGFLNRDITDEWKGWMQIAILIYHFFGASKISGIYNPIRVLVASYLFMTGYGHFFFYYKKADFGFQRVVMVLVRLNLLSVVLPYTMNTDYAFYYFAPLVSWWYLIIYATMAIGSKYNDRPAFLLTKLFTCAGLVTLFMHFPWLMEDVFKVLNTVFNIQWSAKEWSFRVTLDLFIVWVGMLCAYGFVKFNEHQISDRPWFPVMRTATLVGSVLGMIWYFWFELHLASKFVYNEYHAVVCIVPIMSFVFLRNASPVLRSSTSKIFCFIGQCSLETFILQFHGWLASDTKAILLAVPSTQWRPVNLVISTICFIWLSYRVSGATGEITEWLVGKKKALPLPATSANSSTSPGRQATSPTLTSASAMQAVVVGPQDGAKGGIPESIPMMNQADKDIGGLTPMEDETLERRDSWPTWMASTAASLTGRTVEGYAPLTRRWKDQTVLSVIQNLGDLMKKHNSVKIAVILLGLWALNWIY</sequence>
<proteinExistence type="inferred from homology"/>